<comment type="catalytic activity">
    <reaction evidence="3">
        <text>O-phospho-L-tyrosyl-[protein] + H2O = L-tyrosyl-[protein] + phosphate</text>
        <dbReference type="Rhea" id="RHEA:10684"/>
        <dbReference type="Rhea" id="RHEA-COMP:10136"/>
        <dbReference type="Rhea" id="RHEA-COMP:20101"/>
        <dbReference type="ChEBI" id="CHEBI:15377"/>
        <dbReference type="ChEBI" id="CHEBI:43474"/>
        <dbReference type="ChEBI" id="CHEBI:46858"/>
        <dbReference type="ChEBI" id="CHEBI:61978"/>
        <dbReference type="EC" id="3.1.3.48"/>
    </reaction>
</comment>
<comment type="similarity">
    <text evidence="4">Belongs to the protein-tyrosine phosphatase family.</text>
</comment>
<sequence>SKSASIVMLTELVERGQAKCAQYWPNDGILTFGDIEVEFLSVNESEDYSERDFKVSNRSDNNGSQLIVKQFHYHGWPEVGAPVSGYSMIELVEDVQKQQQNSGNHPIVI</sequence>
<accession>P28196</accession>
<gene>
    <name type="primary">STY-4</name>
</gene>
<name>PTP4_STYPL</name>
<proteinExistence type="evidence at transcript level"/>
<organism>
    <name type="scientific">Styela plicata</name>
    <name type="common">Wrinkled sea squirt</name>
    <name type="synonym">Ascidia plicata</name>
    <dbReference type="NCBI Taxonomy" id="7726"/>
    <lineage>
        <taxon>Eukaryota</taxon>
        <taxon>Metazoa</taxon>
        <taxon>Chordata</taxon>
        <taxon>Tunicata</taxon>
        <taxon>Ascidiacea</taxon>
        <taxon>Stolidobranchia</taxon>
        <taxon>Styelidae</taxon>
        <taxon>Styela</taxon>
    </lineage>
</organism>
<dbReference type="EC" id="3.1.3.48"/>
<dbReference type="EMBL" id="M37989">
    <property type="protein sequence ID" value="AAA29822.1"/>
    <property type="molecule type" value="mRNA"/>
</dbReference>
<dbReference type="SMR" id="P28196"/>
<dbReference type="GO" id="GO:0004725">
    <property type="term" value="F:protein tyrosine phosphatase activity"/>
    <property type="evidence" value="ECO:0007669"/>
    <property type="project" value="UniProtKB-EC"/>
</dbReference>
<dbReference type="Gene3D" id="3.90.190.10">
    <property type="entry name" value="Protein tyrosine phosphatase superfamily"/>
    <property type="match status" value="1"/>
</dbReference>
<dbReference type="InterPro" id="IPR029021">
    <property type="entry name" value="Prot-tyrosine_phosphatase-like"/>
</dbReference>
<dbReference type="InterPro" id="IPR050348">
    <property type="entry name" value="Protein-Tyr_Phosphatase"/>
</dbReference>
<dbReference type="InterPro" id="IPR000242">
    <property type="entry name" value="PTP_cat"/>
</dbReference>
<dbReference type="PANTHER" id="PTHR19134">
    <property type="entry name" value="RECEPTOR-TYPE TYROSINE-PROTEIN PHOSPHATASE"/>
    <property type="match status" value="1"/>
</dbReference>
<dbReference type="PANTHER" id="PTHR19134:SF553">
    <property type="entry name" value="TYROSINE-PROTEIN PHOSPHATASE 10D-RELATED"/>
    <property type="match status" value="1"/>
</dbReference>
<dbReference type="Pfam" id="PF00102">
    <property type="entry name" value="Y_phosphatase"/>
    <property type="match status" value="1"/>
</dbReference>
<dbReference type="SUPFAM" id="SSF52799">
    <property type="entry name" value="(Phosphotyrosine protein) phosphatases II"/>
    <property type="match status" value="1"/>
</dbReference>
<dbReference type="PROSITE" id="PS50055">
    <property type="entry name" value="TYR_PHOSPHATASE_PTP"/>
    <property type="match status" value="1"/>
</dbReference>
<evidence type="ECO:0000255" key="1"/>
<evidence type="ECO:0000255" key="2">
    <source>
        <dbReference type="PROSITE-ProRule" id="PRU00160"/>
    </source>
</evidence>
<evidence type="ECO:0000255" key="3">
    <source>
        <dbReference type="PROSITE-ProRule" id="PRU10044"/>
    </source>
</evidence>
<evidence type="ECO:0000305" key="4"/>
<protein>
    <recommendedName>
        <fullName>Tyrosine-protein phosphatase 4</fullName>
        <ecNumber>3.1.3.48</ecNumber>
    </recommendedName>
</protein>
<keyword id="KW-0378">Hydrolase</keyword>
<keyword id="KW-0904">Protein phosphatase</keyword>
<reference key="1">
    <citation type="journal article" date="1991" name="Immunogenetics">
        <title>Protein tyrosine phosphatase domains from the protochordate Styela plicata.</title>
        <authorList>
            <person name="Matthews R.J."/>
            <person name="Flores E."/>
            <person name="Thomas M.L."/>
        </authorList>
    </citation>
    <scope>NUCLEOTIDE SEQUENCE [MRNA]</scope>
</reference>
<feature type="chain" id="PRO_0000094892" description="Tyrosine-protein phosphatase 4">
    <location>
        <begin position="1" status="less than"/>
        <end position="109" status="greater than"/>
    </location>
</feature>
<feature type="domain" description="Tyrosine-protein phosphatase" evidence="2">
    <location>
        <begin position="1" status="less than"/>
        <end position="109" status="greater than"/>
    </location>
</feature>
<feature type="binding site" evidence="1">
    <location>
        <position position="78"/>
    </location>
    <ligand>
        <name>substrate</name>
    </ligand>
</feature>
<feature type="non-terminal residue">
    <location>
        <position position="1"/>
    </location>
</feature>
<feature type="non-terminal residue">
    <location>
        <position position="109"/>
    </location>
</feature>